<accession>A7ZTD9</accession>
<dbReference type="EC" id="2.9.1.1" evidence="1"/>
<dbReference type="EMBL" id="CP000800">
    <property type="protein sequence ID" value="ABV17971.1"/>
    <property type="molecule type" value="Genomic_DNA"/>
</dbReference>
<dbReference type="RefSeq" id="WP_000206280.1">
    <property type="nucleotide sequence ID" value="NC_009801.1"/>
</dbReference>
<dbReference type="SMR" id="A7ZTD9"/>
<dbReference type="KEGG" id="ecw:EcE24377A_4089"/>
<dbReference type="HOGENOM" id="CLU_038142_1_0_6"/>
<dbReference type="UniPathway" id="UPA00906">
    <property type="reaction ID" value="UER00896"/>
</dbReference>
<dbReference type="Proteomes" id="UP000001122">
    <property type="component" value="Chromosome"/>
</dbReference>
<dbReference type="GO" id="GO:0005737">
    <property type="term" value="C:cytoplasm"/>
    <property type="evidence" value="ECO:0007669"/>
    <property type="project" value="UniProtKB-SubCell"/>
</dbReference>
<dbReference type="GO" id="GO:0004125">
    <property type="term" value="F:L-seryl-tRNA(Sec) selenium transferase activity"/>
    <property type="evidence" value="ECO:0007669"/>
    <property type="project" value="UniProtKB-UniRule"/>
</dbReference>
<dbReference type="GO" id="GO:0001717">
    <property type="term" value="P:conversion of seryl-tRNAsec to selenocys-tRNAsec"/>
    <property type="evidence" value="ECO:0007669"/>
    <property type="project" value="UniProtKB-UniRule"/>
</dbReference>
<dbReference type="GO" id="GO:0001514">
    <property type="term" value="P:selenocysteine incorporation"/>
    <property type="evidence" value="ECO:0007669"/>
    <property type="project" value="UniProtKB-UniRule"/>
</dbReference>
<dbReference type="FunFam" id="3.40.640.10:FF:000028">
    <property type="entry name" value="L-seryl-tRNA(Sec) selenium transferase"/>
    <property type="match status" value="1"/>
</dbReference>
<dbReference type="FunFam" id="3.90.1150.180:FF:000001">
    <property type="entry name" value="L-seryl-tRNA(Sec) selenium transferase"/>
    <property type="match status" value="1"/>
</dbReference>
<dbReference type="Gene3D" id="3.90.1150.180">
    <property type="match status" value="1"/>
</dbReference>
<dbReference type="Gene3D" id="3.40.640.10">
    <property type="entry name" value="Type I PLP-dependent aspartate aminotransferase-like (Major domain)"/>
    <property type="match status" value="1"/>
</dbReference>
<dbReference type="HAMAP" id="MF_00423">
    <property type="entry name" value="SelA"/>
    <property type="match status" value="1"/>
</dbReference>
<dbReference type="InterPro" id="IPR015424">
    <property type="entry name" value="PyrdxlP-dep_Trfase"/>
</dbReference>
<dbReference type="InterPro" id="IPR015421">
    <property type="entry name" value="PyrdxlP-dep_Trfase_major"/>
</dbReference>
<dbReference type="InterPro" id="IPR018319">
    <property type="entry name" value="SelA-like"/>
</dbReference>
<dbReference type="InterPro" id="IPR004534">
    <property type="entry name" value="SelA_trans"/>
</dbReference>
<dbReference type="InterPro" id="IPR025862">
    <property type="entry name" value="SelA_trans_N_dom"/>
</dbReference>
<dbReference type="NCBIfam" id="TIGR00474">
    <property type="entry name" value="selA"/>
    <property type="match status" value="1"/>
</dbReference>
<dbReference type="PANTHER" id="PTHR32328">
    <property type="entry name" value="L-SERYL-TRNA(SEC) SELENIUM TRANSFERASE"/>
    <property type="match status" value="1"/>
</dbReference>
<dbReference type="PANTHER" id="PTHR32328:SF0">
    <property type="entry name" value="L-SERYL-TRNA(SEC) SELENIUM TRANSFERASE"/>
    <property type="match status" value="1"/>
</dbReference>
<dbReference type="Pfam" id="PF12390">
    <property type="entry name" value="Se-cys_synth_N"/>
    <property type="match status" value="1"/>
</dbReference>
<dbReference type="Pfam" id="PF03841">
    <property type="entry name" value="SelA"/>
    <property type="match status" value="1"/>
</dbReference>
<dbReference type="SUPFAM" id="SSF53383">
    <property type="entry name" value="PLP-dependent transferases"/>
    <property type="match status" value="1"/>
</dbReference>
<sequence>MTTETRSLYSQLPAIDRLLRDSSFLSLRDTYGHTRVVELLRQMLDEAREVIRGSQTLPAWCENWAQEVDARLTKEAQSALRPVINLTGTVLHTNLGRALQAEAAVEAVAQAMRSPVTLEYDLDDAGRGHRDRALAQLLCRITGAEDACIVNNNAAAVLLMLAATASGKEVVVSRGELVEIGGAFRIPDVMRQAGCTLHEVGTTNRTHANDYRQAVNENTALLMKVHTSNYSIQGFTKAIDESELVALGKELDVPVVTDLGSGSLVDLSQYGLPKEPMPQELIAAGVSLVSFSGDKLLGGPQAGIIVGKKEMIARLQSHPLKRALRADKMTLAALEATLRLYLHPEALSEKLPTLRLLTRSAEVIQIQAQRLQAPLAAHYGAEFAVQVMPCLSQIGSGSLPVDRLPSAALTFTPHDGRGSHLESLAARWRELPVPVIGRIYDGRLWLDLRCLEDEQRFLEMLLK</sequence>
<name>SELA_ECO24</name>
<protein>
    <recommendedName>
        <fullName evidence="1">L-seryl-tRNA(Sec) selenium transferase</fullName>
        <ecNumber evidence="1">2.9.1.1</ecNumber>
    </recommendedName>
    <alternativeName>
        <fullName evidence="1">Selenocysteine synthase</fullName>
        <shortName evidence="1">Sec synthase</shortName>
    </alternativeName>
    <alternativeName>
        <fullName evidence="1">Selenocysteinyl-tRNA(Sec) synthase</fullName>
    </alternativeName>
</protein>
<feature type="chain" id="PRO_1000060098" description="L-seryl-tRNA(Sec) selenium transferase">
    <location>
        <begin position="1"/>
        <end position="463"/>
    </location>
</feature>
<feature type="modified residue" description="N6-(pyridoxal phosphate)lysine" evidence="1">
    <location>
        <position position="295"/>
    </location>
</feature>
<keyword id="KW-0963">Cytoplasm</keyword>
<keyword id="KW-0648">Protein biosynthesis</keyword>
<keyword id="KW-0663">Pyridoxal phosphate</keyword>
<keyword id="KW-1185">Reference proteome</keyword>
<keyword id="KW-0711">Selenium</keyword>
<keyword id="KW-0808">Transferase</keyword>
<gene>
    <name evidence="1" type="primary">selA</name>
    <name type="ordered locus">EcE24377A_4089</name>
</gene>
<evidence type="ECO:0000255" key="1">
    <source>
        <dbReference type="HAMAP-Rule" id="MF_00423"/>
    </source>
</evidence>
<organism>
    <name type="scientific">Escherichia coli O139:H28 (strain E24377A / ETEC)</name>
    <dbReference type="NCBI Taxonomy" id="331111"/>
    <lineage>
        <taxon>Bacteria</taxon>
        <taxon>Pseudomonadati</taxon>
        <taxon>Pseudomonadota</taxon>
        <taxon>Gammaproteobacteria</taxon>
        <taxon>Enterobacterales</taxon>
        <taxon>Enterobacteriaceae</taxon>
        <taxon>Escherichia</taxon>
    </lineage>
</organism>
<comment type="function">
    <text evidence="1">Converts seryl-tRNA(Sec) to selenocysteinyl-tRNA(Sec) required for selenoprotein biosynthesis.</text>
</comment>
<comment type="catalytic activity">
    <reaction evidence="1">
        <text>L-seryl-tRNA(Sec) + selenophosphate + H(+) = L-selenocysteinyl-tRNA(Sec) + phosphate</text>
        <dbReference type="Rhea" id="RHEA:22728"/>
        <dbReference type="Rhea" id="RHEA-COMP:9742"/>
        <dbReference type="Rhea" id="RHEA-COMP:9743"/>
        <dbReference type="ChEBI" id="CHEBI:15378"/>
        <dbReference type="ChEBI" id="CHEBI:16144"/>
        <dbReference type="ChEBI" id="CHEBI:43474"/>
        <dbReference type="ChEBI" id="CHEBI:78533"/>
        <dbReference type="ChEBI" id="CHEBI:78573"/>
        <dbReference type="EC" id="2.9.1.1"/>
    </reaction>
</comment>
<comment type="cofactor">
    <cofactor evidence="1">
        <name>pyridoxal 5'-phosphate</name>
        <dbReference type="ChEBI" id="CHEBI:597326"/>
    </cofactor>
</comment>
<comment type="pathway">
    <text evidence="1">Aminoacyl-tRNA biosynthesis; selenocysteinyl-tRNA(Sec) biosynthesis; selenocysteinyl-tRNA(Sec) from L-seryl-tRNA(Sec) (bacterial route): step 1/1.</text>
</comment>
<comment type="subunit">
    <text evidence="1">Homodecamer; pentamer of dimers. Binds only one seryl-tRNA(Sec) per dimer.</text>
</comment>
<comment type="subcellular location">
    <subcellularLocation>
        <location evidence="1">Cytoplasm</location>
    </subcellularLocation>
</comment>
<comment type="similarity">
    <text evidence="1">Belongs to the SelA family.</text>
</comment>
<proteinExistence type="inferred from homology"/>
<reference key="1">
    <citation type="journal article" date="2008" name="J. Bacteriol.">
        <title>The pangenome structure of Escherichia coli: comparative genomic analysis of E. coli commensal and pathogenic isolates.</title>
        <authorList>
            <person name="Rasko D.A."/>
            <person name="Rosovitz M.J."/>
            <person name="Myers G.S.A."/>
            <person name="Mongodin E.F."/>
            <person name="Fricke W.F."/>
            <person name="Gajer P."/>
            <person name="Crabtree J."/>
            <person name="Sebaihia M."/>
            <person name="Thomson N.R."/>
            <person name="Chaudhuri R."/>
            <person name="Henderson I.R."/>
            <person name="Sperandio V."/>
            <person name="Ravel J."/>
        </authorList>
    </citation>
    <scope>NUCLEOTIDE SEQUENCE [LARGE SCALE GENOMIC DNA]</scope>
    <source>
        <strain>E24377A / ETEC</strain>
    </source>
</reference>